<name>NCAP_I77AE</name>
<organismHost>
    <name type="scientific">Aves</name>
    <dbReference type="NCBI Taxonomy" id="8782"/>
</organismHost>
<proteinExistence type="inferred from homology"/>
<gene>
    <name evidence="1" type="primary">NP</name>
</gene>
<comment type="function">
    <text evidence="1">Encapsidates the negative strand viral RNA, protecting it from nucleases. The encapsidated genomic RNA is termed the ribonucleoprotein (RNP) and serves as template for transcription and replication. The RNP needs to be localized in the host nucleus to start an infectious cycle, but is too large to diffuse through the nuclear pore complex. NP comprises at least 2 nuclear localization signals that are responsible for the active RNP import into the nucleus through cellular importin alpha/beta pathway. Later in the infection, nclear export of RNPs are mediated through viral proteins NEP interacting with M1 which binds nucleoproteins. It is possible that nucleoprotein binds directly host exportin-1/XPO1 and plays an active role in RNPs nuclear export. M1 interaction with RNP seems to hide nucleoprotein's nuclear localization signals. Soon after a virion infects a new cell, M1 dissociates from the RNP under acidification of the virion driven by M2 protein. Dissociation of M1 from RNP unmasks nucleoprotein's nuclear localization signals, targeting the RNP to the nucleus.</text>
</comment>
<comment type="subunit">
    <text evidence="1">Homomultimerizes to form the nucleocapsid. May bind host exportin-1/XPO1. Binds to viral genomic RNA. Protein-RNA contacts are mediated by a combination of electrostatic interactions between positively charged residues and the phosphate backbone and planar interactions between aromatic side chains and bases.</text>
</comment>
<comment type="subcellular location">
    <subcellularLocation>
        <location evidence="1">Virion</location>
    </subcellularLocation>
    <subcellularLocation>
        <location evidence="1">Host nucleus</location>
    </subcellularLocation>
</comment>
<comment type="PTM">
    <text evidence="1">Late in virus-infected cells, may be cleaved from a 56-kDa protein to a 53-kDa protein by a cellular caspase. This cleavage might be a marker for the onset of apoptosis in infected cells or have a specific function in virus host interaction.</text>
</comment>
<comment type="similarity">
    <text evidence="1">Belongs to the influenza viruses nucleoprotein family.</text>
</comment>
<feature type="chain" id="PRO_0000079052" description="Nucleoprotein">
    <location>
        <begin position="1"/>
        <end position="498"/>
    </location>
</feature>
<feature type="region of interest" description="Disordered" evidence="2">
    <location>
        <begin position="1"/>
        <end position="21"/>
    </location>
</feature>
<feature type="short sequence motif" description="Unconventional nuclear localization signal" evidence="1">
    <location>
        <begin position="1"/>
        <end position="18"/>
    </location>
</feature>
<feature type="short sequence motif" description="Bipartite nuclear localization signal" evidence="1">
    <location>
        <begin position="198"/>
        <end position="216"/>
    </location>
</feature>
<organism>
    <name type="scientific">Influenza A virus (strain A/Gull/Maryland/5/1977 H11N9)</name>
    <dbReference type="NCBI Taxonomy" id="383552"/>
    <lineage>
        <taxon>Viruses</taxon>
        <taxon>Riboviria</taxon>
        <taxon>Orthornavirae</taxon>
        <taxon>Negarnaviricota</taxon>
        <taxon>Polyploviricotina</taxon>
        <taxon>Insthoviricetes</taxon>
        <taxon>Articulavirales</taxon>
        <taxon>Orthomyxoviridae</taxon>
        <taxon>Alphainfluenzavirus</taxon>
        <taxon>Alphainfluenzavirus influenzae</taxon>
        <taxon>Influenza A virus</taxon>
    </lineage>
</organism>
<reference key="1">
    <citation type="journal article" date="1991" name="J. Virol.">
        <title>Evolution of influenza A virus nucleoprotein genes: implications for the origins of H1N1 human and classical swine viruses.</title>
        <authorList>
            <person name="Gorman O.T."/>
            <person name="Bean W.J."/>
            <person name="Kawaoka Y."/>
            <person name="Donatelli I."/>
            <person name="Guo Y."/>
            <person name="Webster R.G."/>
        </authorList>
    </citation>
    <scope>NUCLEOTIDE SEQUENCE [GENOMIC RNA]</scope>
</reference>
<evidence type="ECO:0000255" key="1">
    <source>
        <dbReference type="HAMAP-Rule" id="MF_04070"/>
    </source>
</evidence>
<evidence type="ECO:0000256" key="2">
    <source>
        <dbReference type="SAM" id="MobiDB-lite"/>
    </source>
</evidence>
<dbReference type="EMBL" id="M63777">
    <property type="protein sequence ID" value="AAA52238.1"/>
    <property type="molecule type" value="Genomic_RNA"/>
</dbReference>
<dbReference type="SMR" id="P26059"/>
<dbReference type="GO" id="GO:0019029">
    <property type="term" value="C:helical viral capsid"/>
    <property type="evidence" value="ECO:0007669"/>
    <property type="project" value="UniProtKB-UniRule"/>
</dbReference>
<dbReference type="GO" id="GO:0043657">
    <property type="term" value="C:host cell"/>
    <property type="evidence" value="ECO:0007669"/>
    <property type="project" value="GOC"/>
</dbReference>
<dbReference type="GO" id="GO:0042025">
    <property type="term" value="C:host cell nucleus"/>
    <property type="evidence" value="ECO:0007669"/>
    <property type="project" value="UniProtKB-SubCell"/>
</dbReference>
<dbReference type="GO" id="GO:1990904">
    <property type="term" value="C:ribonucleoprotein complex"/>
    <property type="evidence" value="ECO:0007669"/>
    <property type="project" value="UniProtKB-KW"/>
</dbReference>
<dbReference type="GO" id="GO:0019013">
    <property type="term" value="C:viral nucleocapsid"/>
    <property type="evidence" value="ECO:0007669"/>
    <property type="project" value="UniProtKB-UniRule"/>
</dbReference>
<dbReference type="GO" id="GO:0003723">
    <property type="term" value="F:RNA binding"/>
    <property type="evidence" value="ECO:0007669"/>
    <property type="project" value="UniProtKB-UniRule"/>
</dbReference>
<dbReference type="GO" id="GO:0005198">
    <property type="term" value="F:structural molecule activity"/>
    <property type="evidence" value="ECO:0007669"/>
    <property type="project" value="UniProtKB-UniRule"/>
</dbReference>
<dbReference type="GO" id="GO:0046718">
    <property type="term" value="P:symbiont entry into host cell"/>
    <property type="evidence" value="ECO:0007669"/>
    <property type="project" value="UniProtKB-KW"/>
</dbReference>
<dbReference type="GO" id="GO:0075732">
    <property type="term" value="P:viral penetration into host nucleus"/>
    <property type="evidence" value="ECO:0007669"/>
    <property type="project" value="UniProtKB-UniRule"/>
</dbReference>
<dbReference type="HAMAP" id="MF_04070">
    <property type="entry name" value="INFV_NCAP"/>
    <property type="match status" value="1"/>
</dbReference>
<dbReference type="InterPro" id="IPR002141">
    <property type="entry name" value="Flu_NP"/>
</dbReference>
<dbReference type="Pfam" id="PF00506">
    <property type="entry name" value="Flu_NP"/>
    <property type="match status" value="1"/>
</dbReference>
<dbReference type="SUPFAM" id="SSF161003">
    <property type="entry name" value="flu NP-like"/>
    <property type="match status" value="1"/>
</dbReference>
<keyword id="KW-0167">Capsid protein</keyword>
<keyword id="KW-1139">Helical capsid protein</keyword>
<keyword id="KW-1048">Host nucleus</keyword>
<keyword id="KW-0945">Host-virus interaction</keyword>
<keyword id="KW-0687">Ribonucleoprotein</keyword>
<keyword id="KW-0694">RNA-binding</keyword>
<keyword id="KW-0543">Viral nucleoprotein</keyword>
<keyword id="KW-1163">Viral penetration into host nucleus</keyword>
<keyword id="KW-0946">Virion</keyword>
<keyword id="KW-1160">Virus entry into host cell</keyword>
<accession>P26059</accession>
<protein>
    <recommendedName>
        <fullName evidence="1">Nucleoprotein</fullName>
    </recommendedName>
    <alternativeName>
        <fullName evidence="1">Nucleocapsid protein</fullName>
        <shortName evidence="1">Protein N</shortName>
    </alternativeName>
</protein>
<sequence length="498" mass="56192">MASQGTKRSYEQMETGGERQNATEIRASVGRMVGGIGRFYVQMCTELKLNDYEGRLIQNSITIERMVLSAFDERRNKYLEEHPSAGKDPKKTGGPIYKRRDGKWMRELILYDKDEIRRIWRQANNGEDAPAGLTHLMIWHSNLNDATYQRTRALVRTGMDPRMCSLMQGSTLPRRSGAAGAAVKGVGTMVMELIRMIKRGINDRNFWRGENGRRTRIAYERMCNILKGKFQTAAQRAMMDQVRESRNPGNAEIEDLIFLARSALILRGSVAHKSCLPACVYGLAVASGYDFEREGYSLVGIDPFRLLQNSQVFSLIRPNENPAHKSQLVWMACHSAAFEDLRVSSFIRGAKVVPRGQLSTRGVQIASNENMETMDSSTLELRSRYWAIKTRSGGNTNQQRASAGQISVQPTFSVQRNLPFERATIMAAFTGNTEGRTSDMRTEIIRMMENARPEDVSFQGRGVFELSDEKATNPIVPSFDMSNEGSYFFGDNAEEYDN</sequence>